<keyword id="KW-0002">3D-structure</keyword>
<keyword id="KW-0903">Direct protein sequencing</keyword>
<keyword id="KW-0312">Gluconeogenesis</keyword>
<keyword id="KW-0324">Glycolysis</keyword>
<keyword id="KW-0327">Glycosome</keyword>
<keyword id="KW-0413">Isomerase</keyword>
<keyword id="KW-0576">Peroxisome</keyword>
<organism>
    <name type="scientific">Trypanosoma brucei brucei</name>
    <dbReference type="NCBI Taxonomy" id="5702"/>
    <lineage>
        <taxon>Eukaryota</taxon>
        <taxon>Discoba</taxon>
        <taxon>Euglenozoa</taxon>
        <taxon>Kinetoplastea</taxon>
        <taxon>Metakinetoplastina</taxon>
        <taxon>Trypanosomatida</taxon>
        <taxon>Trypanosomatidae</taxon>
        <taxon>Trypanosoma</taxon>
    </lineage>
</organism>
<reference key="1">
    <citation type="journal article" date="1986" name="EMBO J.">
        <title>Characterization of the gene for the microbody (glycosomal) triosephosphate isomerase of Trypanosoma brucei.</title>
        <authorList>
            <person name="Swinkels B.W."/>
            <person name="Gibson W.C."/>
            <person name="Osinga K.A."/>
            <person name="Kramer R."/>
            <person name="Veeneman G.H."/>
            <person name="van Boom J.H."/>
            <person name="Borst P."/>
        </authorList>
    </citation>
    <scope>NUCLEOTIDE SEQUENCE [GENOMIC DNA]</scope>
</reference>
<reference key="2">
    <citation type="journal article" date="1986" name="Biochim. Biophys. Acta">
        <title>How proteins get into microbodies (peroxisomes, glyoxysomes, glycosomes).</title>
        <authorList>
            <person name="Borst P."/>
        </authorList>
    </citation>
    <scope>PROTEIN SEQUENCE</scope>
</reference>
<reference key="3">
    <citation type="journal article" date="1987" name="J. Mol. Biol.">
        <title>Structure determination of the glycosomal triosephosphate isomerase from Trypanosoma brucei brucei at 2.4-A resolution.</title>
        <authorList>
            <person name="Wierenga R.K."/>
            <person name="Kalk K.H."/>
            <person name="Hol W.G.J."/>
        </authorList>
    </citation>
    <scope>X-RAY CRYSTALLOGRAPHY (2.4 ANGSTROMS)</scope>
    <scope>HOMODIMERIZATION</scope>
</reference>
<reference key="4">
    <citation type="journal article" date="1991" name="J. Mol. Biol.">
        <title>Refined 1.83 A structure of trypanosomal triosephosphate isomerase crystallized in the presence of 2.4 M-ammonium sulphate. A comparison with the structure of the trypanosomal triosephosphate isomerase-glycerol-3-phosphate complex.</title>
        <authorList>
            <person name="Wierenga R.K."/>
            <person name="Noble M.E.M."/>
            <person name="Vriend G."/>
            <person name="Nauche S."/>
            <person name="Hol W.G.J."/>
        </authorList>
    </citation>
    <scope>X-RAY CRYSTALLOGRAPHY (1.83 ANGSTROMS)</scope>
    <scope>HOMODIMERIZATION</scope>
</reference>
<reference key="5">
    <citation type="journal article" date="1991" name="Proteins">
        <title>The adaptability of the active site of trypanosomal triosephosphate isomerase as observed in the crystal structures of three different complexes.</title>
        <authorList>
            <person name="Noble M.E."/>
            <person name="Wierenga R.K."/>
            <person name="Lambeir A.-M."/>
            <person name="Opperdoes F.R."/>
            <person name="Thunnissen A.M."/>
            <person name="Kalk K.H."/>
            <person name="Groendijk H."/>
            <person name="Hol W.G.J."/>
        </authorList>
    </citation>
    <scope>X-RAY CRYSTALLOGRAPHY (2.2 ANGSTROMS) IN COMPLEX WITH SUBSTRATE ANALOG</scope>
</reference>
<reference key="6">
    <citation type="journal article" date="1992" name="J. Mol. Biol.">
        <title>Comparison of the refined crystal structures of liganded and unliganded chicken, yeast and trypanosomal triosephosphate isomerase.</title>
        <authorList>
            <person name="Wierenga R.K."/>
            <person name="Noble M.E.M."/>
            <person name="Davenport R.C."/>
        </authorList>
    </citation>
    <scope>COMPARISON OF X-RAY STRUCTURES</scope>
</reference>
<reference key="7">
    <citation type="journal article" date="1993" name="Eur. J. Biochem.">
        <title>Overexpression of trypanosomal triosephosphate isomerase in Escherichia coli and characterisation of a dimer-interface mutant.</title>
        <authorList>
            <person name="Borchert T.V."/>
            <person name="Pratt K."/>
            <person name="Zeelen J.P."/>
            <person name="Callens M."/>
            <person name="Noble M.E.M."/>
            <person name="Opperdoes F.R."/>
            <person name="Michels P.A.M."/>
            <person name="Wierenga R.K."/>
        </authorList>
    </citation>
    <scope>X-RAY CRYSTALLOGRAPHY (2.3 ANGSTROMS)</scope>
    <scope>SEQUENCE REVISION TO 203</scope>
</reference>
<reference key="8">
    <citation type="journal article" date="1995" name="Structure">
        <title>Three new crystal structures of point mutation variants of monoTIM: conformational flexibility of loop-1, loop-4 and loop-8.</title>
        <authorList>
            <person name="Borchert T.V."/>
            <person name="Kishan K.V."/>
            <person name="Zeelen J.P."/>
            <person name="Schliebs W."/>
            <person name="Thanki N."/>
            <person name="Abagyan R."/>
            <person name="Jaenicke R."/>
            <person name="Wierenga R.K."/>
        </authorList>
    </citation>
    <scope>X-RAY CRYSTALLOGRAPHY (2.4 ANGSTROMS) OF MUTANTS IN COMPLEX WITH SUBSTRATE ANALOGS</scope>
</reference>
<reference key="9">
    <citation type="journal article" date="2002" name="FEBS Lett.">
        <title>The importance of the conserved Arg191-Asp227 salt bridge of triosephosphate isomerase for folding, stability, and catalysis.</title>
        <authorList>
            <person name="Kursula I."/>
            <person name="Partanen S."/>
            <person name="Lambeir A.-M."/>
            <person name="Wierenga R.K."/>
        </authorList>
    </citation>
    <scope>X-RAY CRYSTALLOGRAPHY (1.65 ANGSTROMS) IN COMPLEX WITH SUBSTRATE ANALOG</scope>
</reference>
<dbReference type="EC" id="5.3.1.1"/>
<dbReference type="EMBL" id="X03921">
    <property type="protein sequence ID" value="CAA27559.1"/>
    <property type="molecule type" value="Genomic_DNA"/>
</dbReference>
<dbReference type="PDB" id="1AG1">
    <property type="method" value="X-ray"/>
    <property type="resolution" value="2.36 A"/>
    <property type="chains" value="O/T=1-250"/>
</dbReference>
<dbReference type="PDB" id="1DKW">
    <property type="method" value="X-ray"/>
    <property type="resolution" value="2.65 A"/>
    <property type="chains" value="A/B=2-250"/>
</dbReference>
<dbReference type="PDB" id="1IIG">
    <property type="method" value="X-ray"/>
    <property type="resolution" value="2.60 A"/>
    <property type="chains" value="A/B=1-250"/>
</dbReference>
<dbReference type="PDB" id="1IIH">
    <property type="method" value="X-ray"/>
    <property type="resolution" value="2.20 A"/>
    <property type="chains" value="A/B=1-250"/>
</dbReference>
<dbReference type="PDB" id="1KV5">
    <property type="method" value="X-ray"/>
    <property type="resolution" value="1.65 A"/>
    <property type="chains" value="A/B=1-250"/>
</dbReference>
<dbReference type="PDB" id="1ML1">
    <property type="method" value="X-ray"/>
    <property type="resolution" value="2.60 A"/>
    <property type="chains" value="A/C/E/G/I/K=1-250"/>
</dbReference>
<dbReference type="PDB" id="1MSS">
    <property type="method" value="X-ray"/>
    <property type="resolution" value="2.40 A"/>
    <property type="chains" value="A/B=1-250"/>
</dbReference>
<dbReference type="PDB" id="1TPD">
    <property type="method" value="X-ray"/>
    <property type="resolution" value="2.10 A"/>
    <property type="chains" value="A/B=1-250"/>
</dbReference>
<dbReference type="PDB" id="1TPE">
    <property type="method" value="X-ray"/>
    <property type="resolution" value="2.10 A"/>
    <property type="chains" value="A=1-250"/>
</dbReference>
<dbReference type="PDB" id="1TPF">
    <property type="method" value="X-ray"/>
    <property type="resolution" value="1.80 A"/>
    <property type="chains" value="A/B=1-250"/>
</dbReference>
<dbReference type="PDB" id="1TRD">
    <property type="method" value="X-ray"/>
    <property type="resolution" value="2.50 A"/>
    <property type="chains" value="A/B=1-250"/>
</dbReference>
<dbReference type="PDB" id="1TRI">
    <property type="method" value="X-ray"/>
    <property type="resolution" value="2.40 A"/>
    <property type="chains" value="A=1-250"/>
</dbReference>
<dbReference type="PDB" id="1TSI">
    <property type="method" value="X-ray"/>
    <property type="resolution" value="2.84 A"/>
    <property type="chains" value="A/B=1-250"/>
</dbReference>
<dbReference type="PDB" id="1TTI">
    <property type="method" value="X-ray"/>
    <property type="resolution" value="2.40 A"/>
    <property type="chains" value="A=1-250"/>
</dbReference>
<dbReference type="PDB" id="1TTJ">
    <property type="method" value="X-ray"/>
    <property type="resolution" value="2.40 A"/>
    <property type="chains" value="A=1-250"/>
</dbReference>
<dbReference type="PDB" id="2J24">
    <property type="method" value="X-ray"/>
    <property type="resolution" value="2.10 A"/>
    <property type="chains" value="A/B=1-250"/>
</dbReference>
<dbReference type="PDB" id="2J27">
    <property type="method" value="X-ray"/>
    <property type="resolution" value="1.15 A"/>
    <property type="chains" value="A/B=1-250"/>
</dbReference>
<dbReference type="PDB" id="2V0T">
    <property type="method" value="X-ray"/>
    <property type="resolution" value="2.20 A"/>
    <property type="chains" value="A/B/C/D/E/F/G/H=1-250"/>
</dbReference>
<dbReference type="PDB" id="2V2C">
    <property type="method" value="X-ray"/>
    <property type="resolution" value="1.89 A"/>
    <property type="chains" value="A=1-250"/>
</dbReference>
<dbReference type="PDB" id="2V2D">
    <property type="method" value="X-ray"/>
    <property type="resolution" value="2.30 A"/>
    <property type="chains" value="A=1-250"/>
</dbReference>
<dbReference type="PDB" id="2V2H">
    <property type="method" value="X-ray"/>
    <property type="resolution" value="1.18 A"/>
    <property type="chains" value="A/B/C=1-250"/>
</dbReference>
<dbReference type="PDB" id="2V5L">
    <property type="method" value="X-ray"/>
    <property type="resolution" value="2.40 A"/>
    <property type="chains" value="A/B=1-250"/>
</dbReference>
<dbReference type="PDB" id="2VEI">
    <property type="method" value="X-ray"/>
    <property type="resolution" value="1.89 A"/>
    <property type="chains" value="A/B/C=2-250"/>
</dbReference>
<dbReference type="PDB" id="2VEK">
    <property type="method" value="X-ray"/>
    <property type="resolution" value="1.60 A"/>
    <property type="chains" value="A/B=2-250"/>
</dbReference>
<dbReference type="PDB" id="2VEL">
    <property type="method" value="X-ray"/>
    <property type="resolution" value="2.30 A"/>
    <property type="chains" value="A/B=2-250"/>
</dbReference>
<dbReference type="PDB" id="2VEM">
    <property type="method" value="X-ray"/>
    <property type="resolution" value="2.20 A"/>
    <property type="chains" value="A/B=2-250"/>
</dbReference>
<dbReference type="PDB" id="2VEN">
    <property type="method" value="X-ray"/>
    <property type="resolution" value="2.00 A"/>
    <property type="chains" value="A/B=2-250"/>
</dbReference>
<dbReference type="PDB" id="2WSQ">
    <property type="method" value="X-ray"/>
    <property type="resolution" value="2.10 A"/>
    <property type="chains" value="A/B/C/D=2-67, A/B/C/D=84-250"/>
</dbReference>
<dbReference type="PDB" id="2WSR">
    <property type="method" value="X-ray"/>
    <property type="resolution" value="1.65 A"/>
    <property type="chains" value="A=2-67, A=84-250"/>
</dbReference>
<dbReference type="PDB" id="2X16">
    <property type="method" value="X-ray"/>
    <property type="resolution" value="2.13 A"/>
    <property type="chains" value="A/B=2-250"/>
</dbReference>
<dbReference type="PDB" id="2X1R">
    <property type="method" value="X-ray"/>
    <property type="resolution" value="1.98 A"/>
    <property type="chains" value="A/B=2-250"/>
</dbReference>
<dbReference type="PDB" id="2X1S">
    <property type="method" value="X-ray"/>
    <property type="resolution" value="1.93 A"/>
    <property type="chains" value="A/B=2-250"/>
</dbReference>
<dbReference type="PDB" id="2X1T">
    <property type="method" value="X-ray"/>
    <property type="resolution" value="1.83 A"/>
    <property type="chains" value="A/B=2-250"/>
</dbReference>
<dbReference type="PDB" id="2X1U">
    <property type="method" value="X-ray"/>
    <property type="resolution" value="1.84 A"/>
    <property type="chains" value="A/B=2-250"/>
</dbReference>
<dbReference type="PDB" id="2X2G">
    <property type="method" value="X-ray"/>
    <property type="resolution" value="1.90 A"/>
    <property type="chains" value="A/B=2-250"/>
</dbReference>
<dbReference type="PDB" id="2Y6Z">
    <property type="method" value="X-ray"/>
    <property type="resolution" value="2.60 A"/>
    <property type="chains" value="A=1-250"/>
</dbReference>
<dbReference type="PDB" id="2Y70">
    <property type="method" value="X-ray"/>
    <property type="resolution" value="2.30 A"/>
    <property type="chains" value="A/B/C/D=1-250"/>
</dbReference>
<dbReference type="PDB" id="3Q37">
    <property type="method" value="X-ray"/>
    <property type="resolution" value="1.65 A"/>
    <property type="chains" value="A/B/C/D=2-35, A/B/C/D=92-119"/>
</dbReference>
<dbReference type="PDB" id="3TIM">
    <property type="method" value="X-ray"/>
    <property type="resolution" value="2.80 A"/>
    <property type="chains" value="A/B=1-250"/>
</dbReference>
<dbReference type="PDB" id="4JEQ">
    <property type="method" value="X-ray"/>
    <property type="resolution" value="2.30 A"/>
    <property type="chains" value="A/B/C/D/E/F/G/H/I/J/K/L=1-250"/>
</dbReference>
<dbReference type="PDB" id="4PC8">
    <property type="method" value="X-ray"/>
    <property type="resolution" value="1.55 A"/>
    <property type="chains" value="A=1-250"/>
</dbReference>
<dbReference type="PDB" id="4PCF">
    <property type="method" value="X-ray"/>
    <property type="resolution" value="2.71 A"/>
    <property type="chains" value="A/B/C=1-250"/>
</dbReference>
<dbReference type="PDB" id="4TIM">
    <property type="method" value="X-ray"/>
    <property type="resolution" value="2.40 A"/>
    <property type="chains" value="A/B=1-250"/>
</dbReference>
<dbReference type="PDB" id="5I3F">
    <property type="method" value="X-ray"/>
    <property type="resolution" value="1.72 A"/>
    <property type="chains" value="A/B/C/D=1-250"/>
</dbReference>
<dbReference type="PDB" id="5I3G">
    <property type="method" value="X-ray"/>
    <property type="resolution" value="1.96 A"/>
    <property type="chains" value="A/B/C/D=1-250"/>
</dbReference>
<dbReference type="PDB" id="5I3H">
    <property type="method" value="X-ray"/>
    <property type="resolution" value="2.25 A"/>
    <property type="chains" value="A/B=1-250"/>
</dbReference>
<dbReference type="PDB" id="5I3I">
    <property type="method" value="X-ray"/>
    <property type="resolution" value="2.20 A"/>
    <property type="chains" value="A/B/C/D=1-250"/>
</dbReference>
<dbReference type="PDB" id="5I3J">
    <property type="method" value="X-ray"/>
    <property type="resolution" value="1.80 A"/>
    <property type="chains" value="A/B=1-250"/>
</dbReference>
<dbReference type="PDB" id="5I3K">
    <property type="method" value="X-ray"/>
    <property type="resolution" value="2.21 A"/>
    <property type="chains" value="A/B/C/D=1-250"/>
</dbReference>
<dbReference type="PDB" id="5TIM">
    <property type="method" value="X-ray"/>
    <property type="resolution" value="1.83 A"/>
    <property type="chains" value="A/B=1-250"/>
</dbReference>
<dbReference type="PDB" id="6TIM">
    <property type="method" value="X-ray"/>
    <property type="resolution" value="2.20 A"/>
    <property type="chains" value="A/B=1-250"/>
</dbReference>
<dbReference type="PDBsum" id="1AG1"/>
<dbReference type="PDBsum" id="1DKW"/>
<dbReference type="PDBsum" id="1IIG"/>
<dbReference type="PDBsum" id="1IIH"/>
<dbReference type="PDBsum" id="1KV5"/>
<dbReference type="PDBsum" id="1ML1"/>
<dbReference type="PDBsum" id="1MSS"/>
<dbReference type="PDBsum" id="1TPD"/>
<dbReference type="PDBsum" id="1TPE"/>
<dbReference type="PDBsum" id="1TPF"/>
<dbReference type="PDBsum" id="1TRD"/>
<dbReference type="PDBsum" id="1TRI"/>
<dbReference type="PDBsum" id="1TSI"/>
<dbReference type="PDBsum" id="1TTI"/>
<dbReference type="PDBsum" id="1TTJ"/>
<dbReference type="PDBsum" id="2J24"/>
<dbReference type="PDBsum" id="2J27"/>
<dbReference type="PDBsum" id="2V0T"/>
<dbReference type="PDBsum" id="2V2C"/>
<dbReference type="PDBsum" id="2V2D"/>
<dbReference type="PDBsum" id="2V2H"/>
<dbReference type="PDBsum" id="2V5L"/>
<dbReference type="PDBsum" id="2VEI"/>
<dbReference type="PDBsum" id="2VEK"/>
<dbReference type="PDBsum" id="2VEL"/>
<dbReference type="PDBsum" id="2VEM"/>
<dbReference type="PDBsum" id="2VEN"/>
<dbReference type="PDBsum" id="2WSQ"/>
<dbReference type="PDBsum" id="2WSR"/>
<dbReference type="PDBsum" id="2X16"/>
<dbReference type="PDBsum" id="2X1R"/>
<dbReference type="PDBsum" id="2X1S"/>
<dbReference type="PDBsum" id="2X1T"/>
<dbReference type="PDBsum" id="2X1U"/>
<dbReference type="PDBsum" id="2X2G"/>
<dbReference type="PDBsum" id="2Y6Z"/>
<dbReference type="PDBsum" id="2Y70"/>
<dbReference type="PDBsum" id="3Q37"/>
<dbReference type="PDBsum" id="3TIM"/>
<dbReference type="PDBsum" id="4JEQ"/>
<dbReference type="PDBsum" id="4PC8"/>
<dbReference type="PDBsum" id="4PCF"/>
<dbReference type="PDBsum" id="4TIM"/>
<dbReference type="PDBsum" id="5I3F"/>
<dbReference type="PDBsum" id="5I3G"/>
<dbReference type="PDBsum" id="5I3H"/>
<dbReference type="PDBsum" id="5I3I"/>
<dbReference type="PDBsum" id="5I3J"/>
<dbReference type="PDBsum" id="5I3K"/>
<dbReference type="PDBsum" id="5TIM"/>
<dbReference type="PDBsum" id="6TIM"/>
<dbReference type="SMR" id="P04789"/>
<dbReference type="BindingDB" id="P04789"/>
<dbReference type="BRENDA" id="5.3.1.1">
    <property type="organism ID" value="6519"/>
</dbReference>
<dbReference type="SABIO-RK" id="P04789"/>
<dbReference type="UniPathway" id="UPA00109">
    <property type="reaction ID" value="UER00189"/>
</dbReference>
<dbReference type="UniPathway" id="UPA00138"/>
<dbReference type="EvolutionaryTrace" id="P04789"/>
<dbReference type="GO" id="GO:0005737">
    <property type="term" value="C:cytoplasm"/>
    <property type="evidence" value="ECO:0000314"/>
    <property type="project" value="GeneDB"/>
</dbReference>
<dbReference type="GO" id="GO:0005829">
    <property type="term" value="C:cytosol"/>
    <property type="evidence" value="ECO:0007669"/>
    <property type="project" value="TreeGrafter"/>
</dbReference>
<dbReference type="GO" id="GO:0020015">
    <property type="term" value="C:glycosome"/>
    <property type="evidence" value="ECO:0000314"/>
    <property type="project" value="GeneDB"/>
</dbReference>
<dbReference type="GO" id="GO:0004807">
    <property type="term" value="F:triose-phosphate isomerase activity"/>
    <property type="evidence" value="ECO:0000314"/>
    <property type="project" value="GeneDB"/>
</dbReference>
<dbReference type="GO" id="GO:0006094">
    <property type="term" value="P:gluconeogenesis"/>
    <property type="evidence" value="ECO:0007669"/>
    <property type="project" value="UniProtKB-UniPathway"/>
</dbReference>
<dbReference type="GO" id="GO:0046166">
    <property type="term" value="P:glyceraldehyde-3-phosphate biosynthetic process"/>
    <property type="evidence" value="ECO:0007669"/>
    <property type="project" value="TreeGrafter"/>
</dbReference>
<dbReference type="GO" id="GO:0019563">
    <property type="term" value="P:glycerol catabolic process"/>
    <property type="evidence" value="ECO:0007669"/>
    <property type="project" value="TreeGrafter"/>
</dbReference>
<dbReference type="GO" id="GO:0006096">
    <property type="term" value="P:glycolytic process"/>
    <property type="evidence" value="ECO:0000315"/>
    <property type="project" value="GeneDB"/>
</dbReference>
<dbReference type="CDD" id="cd00311">
    <property type="entry name" value="TIM"/>
    <property type="match status" value="1"/>
</dbReference>
<dbReference type="FunFam" id="3.20.20.70:FF:000020">
    <property type="entry name" value="Triosephosphate isomerase"/>
    <property type="match status" value="1"/>
</dbReference>
<dbReference type="Gene3D" id="3.20.20.70">
    <property type="entry name" value="Aldolase class I"/>
    <property type="match status" value="1"/>
</dbReference>
<dbReference type="HAMAP" id="MF_00147_B">
    <property type="entry name" value="TIM_B"/>
    <property type="match status" value="1"/>
</dbReference>
<dbReference type="InterPro" id="IPR013785">
    <property type="entry name" value="Aldolase_TIM"/>
</dbReference>
<dbReference type="InterPro" id="IPR035990">
    <property type="entry name" value="TIM_sf"/>
</dbReference>
<dbReference type="InterPro" id="IPR022896">
    <property type="entry name" value="TrioseP_Isoase_bac/euk"/>
</dbReference>
<dbReference type="InterPro" id="IPR000652">
    <property type="entry name" value="Triosephosphate_isomerase"/>
</dbReference>
<dbReference type="InterPro" id="IPR020861">
    <property type="entry name" value="Triosephosphate_isomerase_AS"/>
</dbReference>
<dbReference type="NCBIfam" id="TIGR00419">
    <property type="entry name" value="tim"/>
    <property type="match status" value="1"/>
</dbReference>
<dbReference type="PANTHER" id="PTHR21139">
    <property type="entry name" value="TRIOSEPHOSPHATE ISOMERASE"/>
    <property type="match status" value="1"/>
</dbReference>
<dbReference type="PANTHER" id="PTHR21139:SF2">
    <property type="entry name" value="TRIOSEPHOSPHATE ISOMERASE"/>
    <property type="match status" value="1"/>
</dbReference>
<dbReference type="Pfam" id="PF00121">
    <property type="entry name" value="TIM"/>
    <property type="match status" value="1"/>
</dbReference>
<dbReference type="SUPFAM" id="SSF51351">
    <property type="entry name" value="Triosephosphate isomerase (TIM)"/>
    <property type="match status" value="1"/>
</dbReference>
<dbReference type="PROSITE" id="PS00171">
    <property type="entry name" value="TIM_1"/>
    <property type="match status" value="1"/>
</dbReference>
<dbReference type="PROSITE" id="PS51440">
    <property type="entry name" value="TIM_2"/>
    <property type="match status" value="1"/>
</dbReference>
<comment type="catalytic activity">
    <reaction>
        <text>D-glyceraldehyde 3-phosphate = dihydroxyacetone phosphate</text>
        <dbReference type="Rhea" id="RHEA:18585"/>
        <dbReference type="ChEBI" id="CHEBI:57642"/>
        <dbReference type="ChEBI" id="CHEBI:59776"/>
        <dbReference type="EC" id="5.3.1.1"/>
    </reaction>
</comment>
<comment type="pathway">
    <text>Carbohydrate biosynthesis; gluconeogenesis.</text>
</comment>
<comment type="pathway">
    <text>Carbohydrate degradation; glycolysis; D-glyceraldehyde 3-phosphate from glycerone phosphate: step 1/1.</text>
</comment>
<comment type="subunit">
    <text evidence="1 2 3">Homodimer.</text>
</comment>
<comment type="subcellular location">
    <subcellularLocation>
        <location>Glycosome</location>
    </subcellularLocation>
</comment>
<comment type="miscellaneous">
    <text evidence="5">The enzyme contains a high proportion of positively-charged residues in beta-barrels V and VII (compared to the homologous regions in other triose isomerase sequences). Since 2 clusters of positive charges located at precise distances on the molecular surface are common to 4 glycosomal enzymes, it has been speculated that this might represent a signal for entry into glycosomes (PubMed:3015595).</text>
</comment>
<comment type="similarity">
    <text evidence="4">Belongs to the triosephosphate isomerase family.</text>
</comment>
<sequence length="250" mass="26835">MSKPQPIAAANWKCNGSQQSLSELIDLFNSTSINHDVQCVVASTFVHLAMTKERLSHPKFVIAAQNAIAKSGAFTGEVSLPILKDFGVNWIVLGHSERRAYYGETNEIVADKVAAAVASGFMVIACIGETLQERESGRTAVVVLTQIAAIAKKLKKADWAKVVIAYEPVWAIGTGKVATPQQAQEAHALIRSWVSSKIGADVAGELRILYGGSVNGKNARTLYQQRDVNGFLVGGASLKPEFVDIIKATQ</sequence>
<accession>P04789</accession>
<name>TPIS_TRYBB</name>
<feature type="chain" id="PRO_0000090142" description="Triosephosphate isomerase, glycosomal">
    <location>
        <begin position="1"/>
        <end position="250"/>
    </location>
</feature>
<feature type="active site" description="Electrophile">
    <location>
        <position position="95"/>
    </location>
</feature>
<feature type="active site" description="Proton acceptor">
    <location>
        <position position="167"/>
    </location>
</feature>
<feature type="binding site">
    <location>
        <position position="11"/>
    </location>
    <ligand>
        <name>substrate</name>
    </ligand>
</feature>
<feature type="binding site">
    <location>
        <position position="13"/>
    </location>
    <ligand>
        <name>substrate</name>
    </ligand>
</feature>
<feature type="strand" evidence="8">
    <location>
        <begin position="7"/>
        <end position="11"/>
    </location>
</feature>
<feature type="strand" evidence="6">
    <location>
        <begin position="14"/>
        <end position="16"/>
    </location>
</feature>
<feature type="helix" evidence="8">
    <location>
        <begin position="18"/>
        <end position="29"/>
    </location>
</feature>
<feature type="strand" evidence="8">
    <location>
        <begin position="38"/>
        <end position="42"/>
    </location>
</feature>
<feature type="helix" evidence="8">
    <location>
        <begin position="45"/>
        <end position="47"/>
    </location>
</feature>
<feature type="helix" evidence="8">
    <location>
        <begin position="48"/>
        <end position="54"/>
    </location>
</feature>
<feature type="strand" evidence="8">
    <location>
        <begin position="60"/>
        <end position="65"/>
    </location>
</feature>
<feature type="strand" evidence="8">
    <location>
        <begin position="68"/>
        <end position="70"/>
    </location>
</feature>
<feature type="helix" evidence="10">
    <location>
        <begin position="74"/>
        <end position="79"/>
    </location>
</feature>
<feature type="helix" evidence="8">
    <location>
        <begin position="80"/>
        <end position="85"/>
    </location>
</feature>
<feature type="strand" evidence="8">
    <location>
        <begin position="90"/>
        <end position="94"/>
    </location>
</feature>
<feature type="helix" evidence="8">
    <location>
        <begin position="96"/>
        <end position="101"/>
    </location>
</feature>
<feature type="helix" evidence="8">
    <location>
        <begin position="106"/>
        <end position="119"/>
    </location>
</feature>
<feature type="strand" evidence="8">
    <location>
        <begin position="122"/>
        <end position="127"/>
    </location>
</feature>
<feature type="helix" evidence="8">
    <location>
        <begin position="131"/>
        <end position="135"/>
    </location>
</feature>
<feature type="helix" evidence="8">
    <location>
        <begin position="139"/>
        <end position="152"/>
    </location>
</feature>
<feature type="helix" evidence="8">
    <location>
        <begin position="156"/>
        <end position="161"/>
    </location>
</feature>
<feature type="strand" evidence="8">
    <location>
        <begin position="162"/>
        <end position="167"/>
    </location>
</feature>
<feature type="helix" evidence="8">
    <location>
        <begin position="169"/>
        <end position="171"/>
    </location>
</feature>
<feature type="strand" evidence="9">
    <location>
        <begin position="172"/>
        <end position="175"/>
    </location>
</feature>
<feature type="helix" evidence="8">
    <location>
        <begin position="180"/>
        <end position="197"/>
    </location>
</feature>
<feature type="helix" evidence="8">
    <location>
        <begin position="200"/>
        <end position="205"/>
    </location>
</feature>
<feature type="strand" evidence="8">
    <location>
        <begin position="208"/>
        <end position="213"/>
    </location>
</feature>
<feature type="turn" evidence="8">
    <location>
        <begin position="216"/>
        <end position="218"/>
    </location>
</feature>
<feature type="helix" evidence="8">
    <location>
        <begin position="219"/>
        <end position="223"/>
    </location>
</feature>
<feature type="strand" evidence="7">
    <location>
        <begin position="224"/>
        <end position="227"/>
    </location>
</feature>
<feature type="strand" evidence="8">
    <location>
        <begin position="230"/>
        <end position="234"/>
    </location>
</feature>
<feature type="helix" evidence="8">
    <location>
        <begin position="235"/>
        <end position="238"/>
    </location>
</feature>
<feature type="helix" evidence="8">
    <location>
        <begin position="242"/>
        <end position="247"/>
    </location>
</feature>
<protein>
    <recommendedName>
        <fullName>Triosephosphate isomerase, glycosomal</fullName>
        <shortName>TIM</shortName>
        <shortName>Triose-phosphate isomerase</shortName>
        <ecNumber>5.3.1.1</ecNumber>
    </recommendedName>
</protein>
<proteinExistence type="evidence at protein level"/>
<evidence type="ECO:0000269" key="1">
    <source>
    </source>
</evidence>
<evidence type="ECO:0000269" key="2">
    <source>
    </source>
</evidence>
<evidence type="ECO:0000269" key="3">
    <source>
    </source>
</evidence>
<evidence type="ECO:0000305" key="4"/>
<evidence type="ECO:0000305" key="5">
    <source>
    </source>
</evidence>
<evidence type="ECO:0007829" key="6">
    <source>
        <dbReference type="PDB" id="1MSS"/>
    </source>
</evidence>
<evidence type="ECO:0007829" key="7">
    <source>
        <dbReference type="PDB" id="1TRD"/>
    </source>
</evidence>
<evidence type="ECO:0007829" key="8">
    <source>
        <dbReference type="PDB" id="2J27"/>
    </source>
</evidence>
<evidence type="ECO:0007829" key="9">
    <source>
        <dbReference type="PDB" id="2V2H"/>
    </source>
</evidence>
<evidence type="ECO:0007829" key="10">
    <source>
        <dbReference type="PDB" id="2WSR"/>
    </source>
</evidence>